<keyword id="KW-0058">Aromatic hydrocarbons catabolism</keyword>
<keyword id="KW-0456">Lyase</keyword>
<keyword id="KW-0464">Manganese</keyword>
<keyword id="KW-0479">Metal-binding</keyword>
<keyword id="KW-1185">Reference proteome</keyword>
<feature type="chain" id="PRO_0000387853" description="4-hydroxy-2-oxovalerate aldolase">
    <location>
        <begin position="1"/>
        <end position="352"/>
    </location>
</feature>
<feature type="domain" description="Pyruvate carboxyltransferase" evidence="1">
    <location>
        <begin position="13"/>
        <end position="265"/>
    </location>
</feature>
<feature type="active site" description="Proton acceptor" evidence="1">
    <location>
        <position position="25"/>
    </location>
</feature>
<feature type="binding site" evidence="1">
    <location>
        <begin position="21"/>
        <end position="22"/>
    </location>
    <ligand>
        <name>substrate</name>
    </ligand>
</feature>
<feature type="binding site" evidence="1">
    <location>
        <position position="22"/>
    </location>
    <ligand>
        <name>Mn(2+)</name>
        <dbReference type="ChEBI" id="CHEBI:29035"/>
    </ligand>
</feature>
<feature type="binding site" evidence="1">
    <location>
        <position position="175"/>
    </location>
    <ligand>
        <name>substrate</name>
    </ligand>
</feature>
<feature type="binding site" evidence="1">
    <location>
        <position position="204"/>
    </location>
    <ligand>
        <name>Mn(2+)</name>
        <dbReference type="ChEBI" id="CHEBI:29035"/>
    </ligand>
</feature>
<feature type="binding site" evidence="1">
    <location>
        <position position="204"/>
    </location>
    <ligand>
        <name>substrate</name>
    </ligand>
</feature>
<feature type="binding site" evidence="1">
    <location>
        <position position="206"/>
    </location>
    <ligand>
        <name>Mn(2+)</name>
        <dbReference type="ChEBI" id="CHEBI:29035"/>
    </ligand>
</feature>
<feature type="binding site" evidence="1">
    <location>
        <position position="295"/>
    </location>
    <ligand>
        <name>substrate</name>
    </ligand>
</feature>
<feature type="site" description="Transition state stabilizer" evidence="1">
    <location>
        <position position="21"/>
    </location>
</feature>
<name>HOA_MYCPA</name>
<organism>
    <name type="scientific">Mycolicibacterium paratuberculosis (strain ATCC BAA-968 / K-10)</name>
    <name type="common">Mycobacterium paratuberculosis</name>
    <dbReference type="NCBI Taxonomy" id="262316"/>
    <lineage>
        <taxon>Bacteria</taxon>
        <taxon>Bacillati</taxon>
        <taxon>Actinomycetota</taxon>
        <taxon>Actinomycetes</taxon>
        <taxon>Mycobacteriales</taxon>
        <taxon>Mycobacteriaceae</taxon>
        <taxon>Mycobacterium</taxon>
        <taxon>Mycobacterium avium complex (MAC)</taxon>
    </lineage>
</organism>
<reference key="1">
    <citation type="journal article" date="2005" name="Proc. Natl. Acad. Sci. U.S.A.">
        <title>The complete genome sequence of Mycobacterium avium subspecies paratuberculosis.</title>
        <authorList>
            <person name="Li L."/>
            <person name="Bannantine J.P."/>
            <person name="Zhang Q."/>
            <person name="Amonsin A."/>
            <person name="May B.J."/>
            <person name="Alt D."/>
            <person name="Banerji N."/>
            <person name="Kanjilal S."/>
            <person name="Kapur V."/>
        </authorList>
    </citation>
    <scope>NUCLEOTIDE SEQUENCE [LARGE SCALE GENOMIC DNA]</scope>
    <source>
        <strain>ATCC BAA-968 / K-10</strain>
    </source>
</reference>
<gene>
    <name type="ordered locus">MAP_0533</name>
</gene>
<comment type="catalytic activity">
    <reaction evidence="1">
        <text>(S)-4-hydroxy-2-oxopentanoate = acetaldehyde + pyruvate</text>
        <dbReference type="Rhea" id="RHEA:22624"/>
        <dbReference type="ChEBI" id="CHEBI:15343"/>
        <dbReference type="ChEBI" id="CHEBI:15361"/>
        <dbReference type="ChEBI" id="CHEBI:73143"/>
        <dbReference type="EC" id="4.1.3.39"/>
    </reaction>
</comment>
<comment type="similarity">
    <text evidence="1">Belongs to the 4-hydroxy-2-oxovalerate aldolase family.</text>
</comment>
<dbReference type="EC" id="4.1.3.39" evidence="1"/>
<dbReference type="EMBL" id="AE016958">
    <property type="protein sequence ID" value="AAS02850.1"/>
    <property type="molecule type" value="Genomic_DNA"/>
</dbReference>
<dbReference type="SMR" id="Q743Q8"/>
<dbReference type="STRING" id="262316.MAP_0533"/>
<dbReference type="KEGG" id="mpa:MAP_0533"/>
<dbReference type="eggNOG" id="COG0119">
    <property type="taxonomic scope" value="Bacteria"/>
</dbReference>
<dbReference type="HOGENOM" id="CLU_049173_0_0_11"/>
<dbReference type="Proteomes" id="UP000000580">
    <property type="component" value="Chromosome"/>
</dbReference>
<dbReference type="GO" id="GO:0003852">
    <property type="term" value="F:2-isopropylmalate synthase activity"/>
    <property type="evidence" value="ECO:0007669"/>
    <property type="project" value="TreeGrafter"/>
</dbReference>
<dbReference type="GO" id="GO:0008701">
    <property type="term" value="F:4-hydroxy-2-oxovalerate aldolase activity"/>
    <property type="evidence" value="ECO:0007669"/>
    <property type="project" value="UniProtKB-UniRule"/>
</dbReference>
<dbReference type="GO" id="GO:0030145">
    <property type="term" value="F:manganese ion binding"/>
    <property type="evidence" value="ECO:0007669"/>
    <property type="project" value="UniProtKB-UniRule"/>
</dbReference>
<dbReference type="GO" id="GO:0009056">
    <property type="term" value="P:catabolic process"/>
    <property type="evidence" value="ECO:0007669"/>
    <property type="project" value="UniProtKB-KW"/>
</dbReference>
<dbReference type="GO" id="GO:0009098">
    <property type="term" value="P:L-leucine biosynthetic process"/>
    <property type="evidence" value="ECO:0007669"/>
    <property type="project" value="TreeGrafter"/>
</dbReference>
<dbReference type="CDD" id="cd07943">
    <property type="entry name" value="DRE_TIM_HOA"/>
    <property type="match status" value="1"/>
</dbReference>
<dbReference type="FunFam" id="3.20.20.70:FF:000072">
    <property type="entry name" value="4-hydroxy-2-oxovalerate aldolase"/>
    <property type="match status" value="1"/>
</dbReference>
<dbReference type="Gene3D" id="1.10.8.60">
    <property type="match status" value="1"/>
</dbReference>
<dbReference type="Gene3D" id="3.20.20.70">
    <property type="entry name" value="Aldolase class I"/>
    <property type="match status" value="1"/>
</dbReference>
<dbReference type="HAMAP" id="MF_01656">
    <property type="entry name" value="HOA"/>
    <property type="match status" value="1"/>
</dbReference>
<dbReference type="InterPro" id="IPR050073">
    <property type="entry name" value="2-IPM_HCS-like"/>
</dbReference>
<dbReference type="InterPro" id="IPR017629">
    <property type="entry name" value="4OH_2_O-val_aldolase"/>
</dbReference>
<dbReference type="InterPro" id="IPR013785">
    <property type="entry name" value="Aldolase_TIM"/>
</dbReference>
<dbReference type="InterPro" id="IPR012425">
    <property type="entry name" value="DmpG_comm"/>
</dbReference>
<dbReference type="InterPro" id="IPR035685">
    <property type="entry name" value="DRE_TIM_HOA"/>
</dbReference>
<dbReference type="InterPro" id="IPR000891">
    <property type="entry name" value="PYR_CT"/>
</dbReference>
<dbReference type="NCBIfam" id="TIGR03217">
    <property type="entry name" value="4OH_2_O_val_ald"/>
    <property type="match status" value="1"/>
</dbReference>
<dbReference type="NCBIfam" id="NF006049">
    <property type="entry name" value="PRK08195.1"/>
    <property type="match status" value="1"/>
</dbReference>
<dbReference type="PANTHER" id="PTHR10277:SF9">
    <property type="entry name" value="2-ISOPROPYLMALATE SYNTHASE 1, CHLOROPLASTIC-RELATED"/>
    <property type="match status" value="1"/>
</dbReference>
<dbReference type="PANTHER" id="PTHR10277">
    <property type="entry name" value="HOMOCITRATE SYNTHASE-RELATED"/>
    <property type="match status" value="1"/>
</dbReference>
<dbReference type="Pfam" id="PF07836">
    <property type="entry name" value="DmpG_comm"/>
    <property type="match status" value="1"/>
</dbReference>
<dbReference type="Pfam" id="PF00682">
    <property type="entry name" value="HMGL-like"/>
    <property type="match status" value="1"/>
</dbReference>
<dbReference type="SUPFAM" id="SSF51569">
    <property type="entry name" value="Aldolase"/>
    <property type="match status" value="1"/>
</dbReference>
<dbReference type="SUPFAM" id="SSF89000">
    <property type="entry name" value="post-HMGL domain-like"/>
    <property type="match status" value="1"/>
</dbReference>
<dbReference type="PROSITE" id="PS50991">
    <property type="entry name" value="PYR_CT"/>
    <property type="match status" value="1"/>
</dbReference>
<accession>Q743Q8</accession>
<evidence type="ECO:0000255" key="1">
    <source>
        <dbReference type="HAMAP-Rule" id="MF_01656"/>
    </source>
</evidence>
<protein>
    <recommendedName>
        <fullName evidence="1">4-hydroxy-2-oxovalerate aldolase</fullName>
        <shortName evidence="1">HOA</shortName>
        <ecNumber evidence="1">4.1.3.39</ecNumber>
    </recommendedName>
    <alternativeName>
        <fullName evidence="1">4-hydroxy-2-keto-pentanoic acid aldolase</fullName>
    </alternativeName>
    <alternativeName>
        <fullName evidence="1">4-hydroxy-2-oxopentanoate aldolase</fullName>
    </alternativeName>
</protein>
<proteinExistence type="inferred from homology"/>
<sequence>MTTDIFFNPIWDVRLTDTSLRDGSHHKRHQFTKDEVQAIVAALDAAGVPVIEVTHGDGLGGSSFNYGFSKTPEQELIKLAAETAKDAKIAFLMLPGVGTKEDIKEAQNNGGSICRIATHCTEADVSIQHFGLARELGLETVGFLMMSHTIPPEKLAQQARIMADAGCQCVYVVDSAGALVLEGVRDRVAALVAELGDDAQVGFHGHENLGLGVANSVEAVRAGAKQIDGSCRRFGAGAGNAPVEALIGVFDKIGVKTGIDFFDIADAAEEVVAPAMPAECLLDRNALIMGYSGVYSSFLKHAIRQSERYGVPAHQLLHRAGQRKLIGGQEDQLIDIALEIKREQESGAAAAR</sequence>